<organism>
    <name type="scientific">Mus musculus</name>
    <name type="common">Mouse</name>
    <dbReference type="NCBI Taxonomy" id="10090"/>
    <lineage>
        <taxon>Eukaryota</taxon>
        <taxon>Metazoa</taxon>
        <taxon>Chordata</taxon>
        <taxon>Craniata</taxon>
        <taxon>Vertebrata</taxon>
        <taxon>Euteleostomi</taxon>
        <taxon>Mammalia</taxon>
        <taxon>Eutheria</taxon>
        <taxon>Euarchontoglires</taxon>
        <taxon>Glires</taxon>
        <taxon>Rodentia</taxon>
        <taxon>Myomorpha</taxon>
        <taxon>Muroidea</taxon>
        <taxon>Muridae</taxon>
        <taxon>Murinae</taxon>
        <taxon>Mus</taxon>
        <taxon>Mus</taxon>
    </lineage>
</organism>
<protein>
    <recommendedName>
        <fullName>Protein tyrosine phosphatase domain-containing protein 1</fullName>
        <ecNumber>3.1.3.-</ecNumber>
    </recommendedName>
</protein>
<sequence length="747" mass="83934">MAAGVLPQNEDPYSTLVNSSGHAAHMDENSGRPAPKYTKVGERLRHVIPGHMACSMACGGRACKYENPARWSEQEQAIKGVYSSWVTDNILAMARPSSELLEKYRIIEQFLGQGIKTIINLQRPGEHASCGSALEQESGFTYLPEAFMEAGIYFYNFGWKDYGVASLTAILDMVKVMTFALQEGKVAVHCHAGLGRTGVLIACYLVFATRMTADQAIIFVRAKRPNSIQTRGQLLCVREFTQFLAPLRNIFSCCDPKAHAVTLAQYLIRQRHLLHGYEARLLKYVPKIIHLVCKLLLDLAENRPVVMKSMLEGPVLSAEIEKTVSEMVTLQLDQELLRQNSDVPDPFNPTAEVAEFENQDVILSTEQEFDPLWKRRDIECLQPLTHLKRQLSYSDSDLKRAKAILEQGETPWTVPAQELLDHSLQHQKPTSHCYMPPTPELGFNKEALVQNTFSFWTPSKCGGLEGLKDEGSLLLCRKDIPKEVQRSRTFSVGVSCSHNPGEPVPPNFTSIHKDPEQVTHCRCEAPGGWVPGPVHEMVRSPCSPLNCGSSPKAQFPHGQETQDSTDLSEAVPHAGLQPELSAEARRILAAKALANLNEFVEKEEVKRKVEMWQKELNSREEAWERICGERDPFILCSLMWSWVEQLKEPVITKEDVDMLVDRQADAAEALFLLEKGQYQTILCVLHCIVSLQTLPMEVEEACLLHAIKAFTKVNFDSENGPIVYDTLKKIFKHTLEEKRKMAKDSLS</sequence>
<name>PTPC1_MOUSE</name>
<accession>Q6NZK8</accession>
<accession>Q3V0Z6</accession>
<accession>Q3V3K9</accession>
<accession>Q3V3Y0</accession>
<accession>Q6NV81</accession>
<accession>Q8BKD9</accession>
<proteinExistence type="evidence at protein level"/>
<keyword id="KW-0025">Alternative splicing</keyword>
<keyword id="KW-0970">Cilium biogenesis/degradation</keyword>
<keyword id="KW-0378">Hydrolase</keyword>
<keyword id="KW-0597">Phosphoprotein</keyword>
<keyword id="KW-0904">Protein phosphatase</keyword>
<keyword id="KW-1185">Reference proteome</keyword>
<evidence type="ECO:0000250" key="1">
    <source>
        <dbReference type="UniProtKB" id="A2A3K4"/>
    </source>
</evidence>
<evidence type="ECO:0000255" key="2">
    <source>
        <dbReference type="PROSITE-ProRule" id="PRU00160"/>
    </source>
</evidence>
<evidence type="ECO:0000256" key="3">
    <source>
        <dbReference type="SAM" id="MobiDB-lite"/>
    </source>
</evidence>
<evidence type="ECO:0000269" key="4">
    <source>
    </source>
</evidence>
<evidence type="ECO:0000303" key="5">
    <source>
    </source>
</evidence>
<evidence type="ECO:0000305" key="6"/>
<feature type="chain" id="PRO_0000312213" description="Protein tyrosine phosphatase domain-containing protein 1">
    <location>
        <begin position="1"/>
        <end position="747"/>
    </location>
</feature>
<feature type="domain" description="Tyrosine-protein phosphatase" evidence="2">
    <location>
        <begin position="82"/>
        <end position="253"/>
    </location>
</feature>
<feature type="region of interest" description="Disordered" evidence="3">
    <location>
        <begin position="1"/>
        <end position="36"/>
    </location>
</feature>
<feature type="region of interest" description="Disordered" evidence="3">
    <location>
        <begin position="549"/>
        <end position="570"/>
    </location>
</feature>
<feature type="compositionally biased region" description="Polar residues" evidence="3">
    <location>
        <begin position="11"/>
        <end position="21"/>
    </location>
</feature>
<feature type="active site" description="Phosphocysteine intermediate" evidence="2">
    <location>
        <position position="190"/>
    </location>
</feature>
<feature type="modified residue" description="Phosphoserine" evidence="1">
    <location>
        <position position="392"/>
    </location>
</feature>
<feature type="modified residue" description="Phosphoserine" evidence="1">
    <location>
        <position position="394"/>
    </location>
</feature>
<feature type="modified residue" description="Phosphoserine" evidence="1">
    <location>
        <position position="543"/>
    </location>
</feature>
<feature type="splice variant" id="VSP_029737" description="In isoform 2." evidence="5">
    <location>
        <begin position="1"/>
        <end position="75"/>
    </location>
</feature>
<feature type="splice variant" id="VSP_029738" description="In isoform 3." evidence="5">
    <original>D</original>
    <variation>DGEEKMLILRHLTDPVWMWSRVFCRLELAEPLRESILLVTASAMLKLRFLTRLSSGLSCCIL</variation>
    <location>
        <position position="27"/>
    </location>
</feature>
<feature type="splice variant" id="VSP_029739" description="In isoform 2." evidence="5">
    <original>QAIKGVYSSW</original>
    <variation>MFHGVWWESV</variation>
    <location>
        <begin position="76"/>
        <end position="85"/>
    </location>
</feature>
<feature type="sequence conflict" description="In Ref. 1; BAE20543." evidence="6" ref="1">
    <original>Q</original>
    <variation>H</variation>
    <location>
        <position position="8"/>
    </location>
</feature>
<gene>
    <name type="primary">Ptpdc1</name>
</gene>
<dbReference type="EC" id="3.1.3.-"/>
<dbReference type="EMBL" id="AK030415">
    <property type="protein sequence ID" value="BAE20451.1"/>
    <property type="status" value="ALT_INIT"/>
    <property type="molecule type" value="mRNA"/>
</dbReference>
<dbReference type="EMBL" id="AK038922">
    <property type="protein sequence ID" value="BAE20543.1"/>
    <property type="molecule type" value="mRNA"/>
</dbReference>
<dbReference type="EMBL" id="AK053480">
    <property type="protein sequence ID" value="BAC35397.1"/>
    <property type="molecule type" value="mRNA"/>
</dbReference>
<dbReference type="EMBL" id="AK132781">
    <property type="protein sequence ID" value="BAE21357.1"/>
    <property type="status" value="ALT_INIT"/>
    <property type="molecule type" value="mRNA"/>
</dbReference>
<dbReference type="EMBL" id="BC066081">
    <property type="protein sequence ID" value="AAH66081.1"/>
    <property type="molecule type" value="mRNA"/>
</dbReference>
<dbReference type="EMBL" id="BC068267">
    <property type="protein sequence ID" value="AAH68267.1"/>
    <property type="molecule type" value="mRNA"/>
</dbReference>
<dbReference type="CCDS" id="CCDS26495.1">
    <molecule id="Q6NZK8-1"/>
</dbReference>
<dbReference type="CCDS" id="CCDS88450.1">
    <molecule id="Q6NZK8-3"/>
</dbReference>
<dbReference type="RefSeq" id="NP_001288710.1">
    <molecule id="Q6NZK8-3"/>
    <property type="nucleotide sequence ID" value="NM_001301781.1"/>
</dbReference>
<dbReference type="RefSeq" id="NP_997115.1">
    <molecule id="Q6NZK8-1"/>
    <property type="nucleotide sequence ID" value="NM_207232.2"/>
</dbReference>
<dbReference type="SMR" id="Q6NZK8"/>
<dbReference type="FunCoup" id="Q6NZK8">
    <property type="interactions" value="1315"/>
</dbReference>
<dbReference type="STRING" id="10090.ENSMUSP00000047374"/>
<dbReference type="GlyGen" id="Q6NZK8">
    <property type="glycosylation" value="1 site"/>
</dbReference>
<dbReference type="iPTMnet" id="Q6NZK8"/>
<dbReference type="PhosphoSitePlus" id="Q6NZK8"/>
<dbReference type="SwissPalm" id="Q6NZK8"/>
<dbReference type="CPTAC" id="non-CPTAC-4000"/>
<dbReference type="PaxDb" id="10090-ENSMUSP00000047374"/>
<dbReference type="PeptideAtlas" id="Q6NZK8"/>
<dbReference type="ProteomicsDB" id="301883">
    <molecule id="Q6NZK8-1"/>
</dbReference>
<dbReference type="ProteomicsDB" id="301884">
    <molecule id="Q6NZK8-2"/>
</dbReference>
<dbReference type="ProteomicsDB" id="301885">
    <molecule id="Q6NZK8-3"/>
</dbReference>
<dbReference type="Pumba" id="Q6NZK8"/>
<dbReference type="Antibodypedia" id="13927">
    <property type="antibodies" value="18 antibodies from 7 providers"/>
</dbReference>
<dbReference type="DNASU" id="218232"/>
<dbReference type="Ensembl" id="ENSMUST00000035824.11">
    <molecule id="Q6NZK8-1"/>
    <property type="protein sequence ID" value="ENSMUSP00000047374.10"/>
    <property type="gene ID" value="ENSMUSG00000038042.12"/>
</dbReference>
<dbReference type="Ensembl" id="ENSMUST00000222028.2">
    <molecule id="Q6NZK8-3"/>
    <property type="protein sequence ID" value="ENSMUSP00000152771.2"/>
    <property type="gene ID" value="ENSMUSG00000038042.12"/>
</dbReference>
<dbReference type="GeneID" id="218232"/>
<dbReference type="KEGG" id="mmu:218232"/>
<dbReference type="UCSC" id="uc007qii.2">
    <molecule id="Q6NZK8-1"/>
    <property type="organism name" value="mouse"/>
</dbReference>
<dbReference type="UCSC" id="uc007qij.2">
    <molecule id="Q6NZK8-3"/>
    <property type="organism name" value="mouse"/>
</dbReference>
<dbReference type="UCSC" id="uc007qik.2">
    <molecule id="Q6NZK8-2"/>
    <property type="organism name" value="mouse"/>
</dbReference>
<dbReference type="AGR" id="MGI:2145430"/>
<dbReference type="CTD" id="138639"/>
<dbReference type="MGI" id="MGI:2145430">
    <property type="gene designation" value="Ptpdc1"/>
</dbReference>
<dbReference type="VEuPathDB" id="HostDB:ENSMUSG00000038042"/>
<dbReference type="eggNOG" id="KOG1720">
    <property type="taxonomic scope" value="Eukaryota"/>
</dbReference>
<dbReference type="GeneTree" id="ENSGT00390000004113"/>
<dbReference type="HOGENOM" id="CLU_019730_0_0_1"/>
<dbReference type="InParanoid" id="Q6NZK8"/>
<dbReference type="OMA" id="CNERDPV"/>
<dbReference type="OrthoDB" id="40052at9989"/>
<dbReference type="PhylomeDB" id="Q6NZK8"/>
<dbReference type="TreeFam" id="TF313460"/>
<dbReference type="BioGRID-ORCS" id="218232">
    <property type="hits" value="2 hits in 78 CRISPR screens"/>
</dbReference>
<dbReference type="CD-CODE" id="01CA17F3">
    <property type="entry name" value="Centrosome"/>
</dbReference>
<dbReference type="PRO" id="PR:Q6NZK8"/>
<dbReference type="Proteomes" id="UP000000589">
    <property type="component" value="Chromosome 13"/>
</dbReference>
<dbReference type="RNAct" id="Q6NZK8">
    <property type="molecule type" value="protein"/>
</dbReference>
<dbReference type="Bgee" id="ENSMUSG00000038042">
    <property type="expression patterns" value="Expressed in habenula and 217 other cell types or tissues"/>
</dbReference>
<dbReference type="ExpressionAtlas" id="Q6NZK8">
    <property type="expression patterns" value="baseline and differential"/>
</dbReference>
<dbReference type="GO" id="GO:0005829">
    <property type="term" value="C:cytosol"/>
    <property type="evidence" value="ECO:0007669"/>
    <property type="project" value="Ensembl"/>
</dbReference>
<dbReference type="GO" id="GO:0005654">
    <property type="term" value="C:nucleoplasm"/>
    <property type="evidence" value="ECO:0007669"/>
    <property type="project" value="Ensembl"/>
</dbReference>
<dbReference type="GO" id="GO:0004725">
    <property type="term" value="F:protein tyrosine phosphatase activity"/>
    <property type="evidence" value="ECO:0007669"/>
    <property type="project" value="InterPro"/>
</dbReference>
<dbReference type="GO" id="GO:0060271">
    <property type="term" value="P:cilium assembly"/>
    <property type="evidence" value="ECO:0000315"/>
    <property type="project" value="MGI"/>
</dbReference>
<dbReference type="GO" id="GO:0007224">
    <property type="term" value="P:smoothened signaling pathway"/>
    <property type="evidence" value="ECO:0000315"/>
    <property type="project" value="MGI"/>
</dbReference>
<dbReference type="CDD" id="cd14506">
    <property type="entry name" value="PTP_PTPDC1"/>
    <property type="match status" value="1"/>
</dbReference>
<dbReference type="FunFam" id="3.90.190.10:FF:000027">
    <property type="entry name" value="Protein tyrosine phosphatase domain containing 1"/>
    <property type="match status" value="1"/>
</dbReference>
<dbReference type="Gene3D" id="3.90.190.10">
    <property type="entry name" value="Protein tyrosine phosphatase superfamily"/>
    <property type="match status" value="1"/>
</dbReference>
<dbReference type="InterPro" id="IPR000340">
    <property type="entry name" value="Dual-sp_phosphatase_cat-dom"/>
</dbReference>
<dbReference type="InterPro" id="IPR029021">
    <property type="entry name" value="Prot-tyrosine_phosphatase-like"/>
</dbReference>
<dbReference type="InterPro" id="IPR050561">
    <property type="entry name" value="PTP"/>
</dbReference>
<dbReference type="InterPro" id="IPR049573">
    <property type="entry name" value="PTPDC1_PTP"/>
</dbReference>
<dbReference type="InterPro" id="IPR016130">
    <property type="entry name" value="Tyr_Pase_AS"/>
</dbReference>
<dbReference type="InterPro" id="IPR003595">
    <property type="entry name" value="Tyr_Pase_cat"/>
</dbReference>
<dbReference type="InterPro" id="IPR000387">
    <property type="entry name" value="Tyr_Pase_dom"/>
</dbReference>
<dbReference type="InterPro" id="IPR020422">
    <property type="entry name" value="TYR_PHOSPHATASE_DUAL_dom"/>
</dbReference>
<dbReference type="PANTHER" id="PTHR23339">
    <property type="entry name" value="TYROSINE SPECIFIC PROTEIN PHOSPHATASE AND DUAL SPECIFICITY PROTEIN PHOSPHATASE"/>
    <property type="match status" value="1"/>
</dbReference>
<dbReference type="Pfam" id="PF00782">
    <property type="entry name" value="DSPc"/>
    <property type="match status" value="1"/>
</dbReference>
<dbReference type="SMART" id="SM00195">
    <property type="entry name" value="DSPc"/>
    <property type="match status" value="1"/>
</dbReference>
<dbReference type="SMART" id="SM00404">
    <property type="entry name" value="PTPc_motif"/>
    <property type="match status" value="1"/>
</dbReference>
<dbReference type="SUPFAM" id="SSF52799">
    <property type="entry name" value="(Phosphotyrosine protein) phosphatases II"/>
    <property type="match status" value="1"/>
</dbReference>
<dbReference type="PROSITE" id="PS00383">
    <property type="entry name" value="TYR_PHOSPHATASE_1"/>
    <property type="match status" value="1"/>
</dbReference>
<dbReference type="PROSITE" id="PS50056">
    <property type="entry name" value="TYR_PHOSPHATASE_2"/>
    <property type="match status" value="1"/>
</dbReference>
<dbReference type="PROSITE" id="PS50054">
    <property type="entry name" value="TYR_PHOSPHATASE_DUAL"/>
    <property type="match status" value="1"/>
</dbReference>
<comment type="function">
    <text evidence="4">May play roles in cilia formation and/or maintenance.</text>
</comment>
<comment type="alternative products">
    <event type="alternative splicing"/>
    <isoform>
        <id>Q6NZK8-1</id>
        <name>1</name>
        <sequence type="displayed"/>
    </isoform>
    <isoform>
        <id>Q6NZK8-2</id>
        <name>2</name>
        <sequence type="described" ref="VSP_029737 VSP_029739"/>
    </isoform>
    <isoform>
        <id>Q6NZK8-3</id>
        <name>3</name>
        <sequence type="described" ref="VSP_029738"/>
    </isoform>
</comment>
<comment type="disruption phenotype">
    <text evidence="4">Elongated cilia.</text>
</comment>
<comment type="similarity">
    <text evidence="6">Belongs to the protein-tyrosine phosphatase family. Non-receptor class PTPDC1 subfamily.</text>
</comment>
<comment type="sequence caution" evidence="6">
    <conflict type="erroneous initiation">
        <sequence resource="EMBL-CDS" id="BAE20451"/>
    </conflict>
</comment>
<comment type="sequence caution" evidence="6">
    <conflict type="erroneous initiation">
        <sequence resource="EMBL-CDS" id="BAE21357"/>
    </conflict>
</comment>
<reference key="1">
    <citation type="journal article" date="2005" name="Science">
        <title>The transcriptional landscape of the mammalian genome.</title>
        <authorList>
            <person name="Carninci P."/>
            <person name="Kasukawa T."/>
            <person name="Katayama S."/>
            <person name="Gough J."/>
            <person name="Frith M.C."/>
            <person name="Maeda N."/>
            <person name="Oyama R."/>
            <person name="Ravasi T."/>
            <person name="Lenhard B."/>
            <person name="Wells C."/>
            <person name="Kodzius R."/>
            <person name="Shimokawa K."/>
            <person name="Bajic V.B."/>
            <person name="Brenner S.E."/>
            <person name="Batalov S."/>
            <person name="Forrest A.R."/>
            <person name="Zavolan M."/>
            <person name="Davis M.J."/>
            <person name="Wilming L.G."/>
            <person name="Aidinis V."/>
            <person name="Allen J.E."/>
            <person name="Ambesi-Impiombato A."/>
            <person name="Apweiler R."/>
            <person name="Aturaliya R.N."/>
            <person name="Bailey T.L."/>
            <person name="Bansal M."/>
            <person name="Baxter L."/>
            <person name="Beisel K.W."/>
            <person name="Bersano T."/>
            <person name="Bono H."/>
            <person name="Chalk A.M."/>
            <person name="Chiu K.P."/>
            <person name="Choudhary V."/>
            <person name="Christoffels A."/>
            <person name="Clutterbuck D.R."/>
            <person name="Crowe M.L."/>
            <person name="Dalla E."/>
            <person name="Dalrymple B.P."/>
            <person name="de Bono B."/>
            <person name="Della Gatta G."/>
            <person name="di Bernardo D."/>
            <person name="Down T."/>
            <person name="Engstrom P."/>
            <person name="Fagiolini M."/>
            <person name="Faulkner G."/>
            <person name="Fletcher C.F."/>
            <person name="Fukushima T."/>
            <person name="Furuno M."/>
            <person name="Futaki S."/>
            <person name="Gariboldi M."/>
            <person name="Georgii-Hemming P."/>
            <person name="Gingeras T.R."/>
            <person name="Gojobori T."/>
            <person name="Green R.E."/>
            <person name="Gustincich S."/>
            <person name="Harbers M."/>
            <person name="Hayashi Y."/>
            <person name="Hensch T.K."/>
            <person name="Hirokawa N."/>
            <person name="Hill D."/>
            <person name="Huminiecki L."/>
            <person name="Iacono M."/>
            <person name="Ikeo K."/>
            <person name="Iwama A."/>
            <person name="Ishikawa T."/>
            <person name="Jakt M."/>
            <person name="Kanapin A."/>
            <person name="Katoh M."/>
            <person name="Kawasawa Y."/>
            <person name="Kelso J."/>
            <person name="Kitamura H."/>
            <person name="Kitano H."/>
            <person name="Kollias G."/>
            <person name="Krishnan S.P."/>
            <person name="Kruger A."/>
            <person name="Kummerfeld S.K."/>
            <person name="Kurochkin I.V."/>
            <person name="Lareau L.F."/>
            <person name="Lazarevic D."/>
            <person name="Lipovich L."/>
            <person name="Liu J."/>
            <person name="Liuni S."/>
            <person name="McWilliam S."/>
            <person name="Madan Babu M."/>
            <person name="Madera M."/>
            <person name="Marchionni L."/>
            <person name="Matsuda H."/>
            <person name="Matsuzawa S."/>
            <person name="Miki H."/>
            <person name="Mignone F."/>
            <person name="Miyake S."/>
            <person name="Morris K."/>
            <person name="Mottagui-Tabar S."/>
            <person name="Mulder N."/>
            <person name="Nakano N."/>
            <person name="Nakauchi H."/>
            <person name="Ng P."/>
            <person name="Nilsson R."/>
            <person name="Nishiguchi S."/>
            <person name="Nishikawa S."/>
            <person name="Nori F."/>
            <person name="Ohara O."/>
            <person name="Okazaki Y."/>
            <person name="Orlando V."/>
            <person name="Pang K.C."/>
            <person name="Pavan W.J."/>
            <person name="Pavesi G."/>
            <person name="Pesole G."/>
            <person name="Petrovsky N."/>
            <person name="Piazza S."/>
            <person name="Reed J."/>
            <person name="Reid J.F."/>
            <person name="Ring B.Z."/>
            <person name="Ringwald M."/>
            <person name="Rost B."/>
            <person name="Ruan Y."/>
            <person name="Salzberg S.L."/>
            <person name="Sandelin A."/>
            <person name="Schneider C."/>
            <person name="Schoenbach C."/>
            <person name="Sekiguchi K."/>
            <person name="Semple C.A."/>
            <person name="Seno S."/>
            <person name="Sessa L."/>
            <person name="Sheng Y."/>
            <person name="Shibata Y."/>
            <person name="Shimada H."/>
            <person name="Shimada K."/>
            <person name="Silva D."/>
            <person name="Sinclair B."/>
            <person name="Sperling S."/>
            <person name="Stupka E."/>
            <person name="Sugiura K."/>
            <person name="Sultana R."/>
            <person name="Takenaka Y."/>
            <person name="Taki K."/>
            <person name="Tammoja K."/>
            <person name="Tan S.L."/>
            <person name="Tang S."/>
            <person name="Taylor M.S."/>
            <person name="Tegner J."/>
            <person name="Teichmann S.A."/>
            <person name="Ueda H.R."/>
            <person name="van Nimwegen E."/>
            <person name="Verardo R."/>
            <person name="Wei C.L."/>
            <person name="Yagi K."/>
            <person name="Yamanishi H."/>
            <person name="Zabarovsky E."/>
            <person name="Zhu S."/>
            <person name="Zimmer A."/>
            <person name="Hide W."/>
            <person name="Bult C."/>
            <person name="Grimmond S.M."/>
            <person name="Teasdale R.D."/>
            <person name="Liu E.T."/>
            <person name="Brusic V."/>
            <person name="Quackenbush J."/>
            <person name="Wahlestedt C."/>
            <person name="Mattick J.S."/>
            <person name="Hume D.A."/>
            <person name="Kai C."/>
            <person name="Sasaki D."/>
            <person name="Tomaru Y."/>
            <person name="Fukuda S."/>
            <person name="Kanamori-Katayama M."/>
            <person name="Suzuki M."/>
            <person name="Aoki J."/>
            <person name="Arakawa T."/>
            <person name="Iida J."/>
            <person name="Imamura K."/>
            <person name="Itoh M."/>
            <person name="Kato T."/>
            <person name="Kawaji H."/>
            <person name="Kawagashira N."/>
            <person name="Kawashima T."/>
            <person name="Kojima M."/>
            <person name="Kondo S."/>
            <person name="Konno H."/>
            <person name="Nakano K."/>
            <person name="Ninomiya N."/>
            <person name="Nishio T."/>
            <person name="Okada M."/>
            <person name="Plessy C."/>
            <person name="Shibata K."/>
            <person name="Shiraki T."/>
            <person name="Suzuki S."/>
            <person name="Tagami M."/>
            <person name="Waki K."/>
            <person name="Watahiki A."/>
            <person name="Okamura-Oho Y."/>
            <person name="Suzuki H."/>
            <person name="Kawai J."/>
            <person name="Hayashizaki Y."/>
        </authorList>
    </citation>
    <scope>NUCLEOTIDE SEQUENCE [LARGE SCALE MRNA] (ISOFORMS 1 AND 3)</scope>
    <scope>NUCLEOTIDE SEQUENCE [LARGE SCALE MRNA] OF 1-600 (ISOFORM 2)</scope>
    <source>
        <strain>C57BL/6J</strain>
        <tissue>Eye</tissue>
        <tissue>Hypothalamus</tissue>
        <tissue>Pituitary</tissue>
        <tissue>Testis</tissue>
    </source>
</reference>
<reference key="2">
    <citation type="journal article" date="2004" name="Genome Res.">
        <title>The status, quality, and expansion of the NIH full-length cDNA project: the Mammalian Gene Collection (MGC).</title>
        <authorList>
            <consortium name="The MGC Project Team"/>
        </authorList>
    </citation>
    <scope>NUCLEOTIDE SEQUENCE [LARGE SCALE MRNA] (ISOFORM 1)</scope>
    <source>
        <strain>C57BL/6J</strain>
        <strain>FVB/N</strain>
        <tissue>Brain</tissue>
        <tissue>Mammary tumor</tissue>
    </source>
</reference>
<reference key="3">
    <citation type="journal article" date="2010" name="Cell">
        <title>A tissue-specific atlas of mouse protein phosphorylation and expression.</title>
        <authorList>
            <person name="Huttlin E.L."/>
            <person name="Jedrychowski M.P."/>
            <person name="Elias J.E."/>
            <person name="Goswami T."/>
            <person name="Rad R."/>
            <person name="Beausoleil S.A."/>
            <person name="Villen J."/>
            <person name="Haas W."/>
            <person name="Sowa M.E."/>
            <person name="Gygi S.P."/>
        </authorList>
    </citation>
    <scope>IDENTIFICATION BY MASS SPECTROMETRY [LARGE SCALE ANALYSIS]</scope>
    <source>
        <tissue>Testis</tissue>
    </source>
</reference>
<reference key="4">
    <citation type="journal article" date="2011" name="Mol. Biol. Cell">
        <title>Functional characterization of putative cilia genes by high-content analysis.</title>
        <authorList>
            <person name="Lai C.K."/>
            <person name="Gupta N."/>
            <person name="Wen X."/>
            <person name="Rangell L."/>
            <person name="Chih B."/>
            <person name="Peterson A.S."/>
            <person name="Bazan J.F."/>
            <person name="Li L."/>
            <person name="Scales S.J."/>
        </authorList>
    </citation>
    <scope>DISRUPTION PHENOTYPE</scope>
    <scope>FUNCTION</scope>
</reference>